<dbReference type="EC" id="2.3.1.-" evidence="9"/>
<dbReference type="EMBL" id="AAHF01000015">
    <property type="protein sequence ID" value="EAL84875.1"/>
    <property type="molecule type" value="Genomic_DNA"/>
</dbReference>
<dbReference type="RefSeq" id="XP_746913.1">
    <property type="nucleotide sequence ID" value="XM_741820.1"/>
</dbReference>
<dbReference type="SMR" id="Q4WA61"/>
<dbReference type="STRING" id="330879.Q4WA61"/>
<dbReference type="EnsemblFungi" id="EAL84875">
    <property type="protein sequence ID" value="EAL84875"/>
    <property type="gene ID" value="AFUA_7G00160"/>
</dbReference>
<dbReference type="GeneID" id="3504088"/>
<dbReference type="KEGG" id="afm:AFUA_7G00160"/>
<dbReference type="VEuPathDB" id="FungiDB:Afu7g00160"/>
<dbReference type="eggNOG" id="KOG1202">
    <property type="taxonomic scope" value="Eukaryota"/>
</dbReference>
<dbReference type="HOGENOM" id="CLU_000022_6_1_1"/>
<dbReference type="InParanoid" id="Q4WA61"/>
<dbReference type="OMA" id="LNTHYDP"/>
<dbReference type="OrthoDB" id="329835at2759"/>
<dbReference type="Proteomes" id="UP000002530">
    <property type="component" value="Chromosome 7"/>
</dbReference>
<dbReference type="GO" id="GO:0004315">
    <property type="term" value="F:3-oxoacyl-[acyl-carrier-protein] synthase activity"/>
    <property type="evidence" value="ECO:0007669"/>
    <property type="project" value="InterPro"/>
</dbReference>
<dbReference type="GO" id="GO:0004312">
    <property type="term" value="F:fatty acid synthase activity"/>
    <property type="evidence" value="ECO:0000318"/>
    <property type="project" value="GO_Central"/>
</dbReference>
<dbReference type="GO" id="GO:0031177">
    <property type="term" value="F:phosphopantetheine binding"/>
    <property type="evidence" value="ECO:0007669"/>
    <property type="project" value="InterPro"/>
</dbReference>
<dbReference type="GO" id="GO:0006633">
    <property type="term" value="P:fatty acid biosynthetic process"/>
    <property type="evidence" value="ECO:0000318"/>
    <property type="project" value="GO_Central"/>
</dbReference>
<dbReference type="GO" id="GO:0019748">
    <property type="term" value="P:secondary metabolic process"/>
    <property type="evidence" value="ECO:0000303"/>
    <property type="project" value="AspGD"/>
</dbReference>
<dbReference type="GO" id="GO:0044550">
    <property type="term" value="P:secondary metabolite biosynthetic process"/>
    <property type="evidence" value="ECO:0000315"/>
    <property type="project" value="AspGD"/>
</dbReference>
<dbReference type="CDD" id="cd00833">
    <property type="entry name" value="PKS"/>
    <property type="match status" value="1"/>
</dbReference>
<dbReference type="FunFam" id="3.40.366.10:FF:000017">
    <property type="entry name" value="Non-reducing polyketide synthase aptA"/>
    <property type="match status" value="1"/>
</dbReference>
<dbReference type="FunFam" id="3.40.366.10:FF:000002">
    <property type="entry name" value="Probable polyketide synthase 2"/>
    <property type="match status" value="1"/>
</dbReference>
<dbReference type="FunFam" id="1.10.1200.10:FF:000011">
    <property type="entry name" value="Sterigmatocystin biosynthesis polyketide synthase"/>
    <property type="match status" value="1"/>
</dbReference>
<dbReference type="FunFam" id="3.10.129.110:FF:000001">
    <property type="entry name" value="Sterigmatocystin biosynthesis polyketide synthase"/>
    <property type="match status" value="1"/>
</dbReference>
<dbReference type="FunFam" id="3.40.47.10:FF:000031">
    <property type="entry name" value="Sterigmatocystin biosynthesis polyketide synthase"/>
    <property type="match status" value="1"/>
</dbReference>
<dbReference type="Gene3D" id="3.30.70.3290">
    <property type="match status" value="1"/>
</dbReference>
<dbReference type="Gene3D" id="3.40.47.10">
    <property type="match status" value="1"/>
</dbReference>
<dbReference type="Gene3D" id="1.10.1200.10">
    <property type="entry name" value="ACP-like"/>
    <property type="match status" value="1"/>
</dbReference>
<dbReference type="Gene3D" id="3.40.366.10">
    <property type="entry name" value="Malonyl-Coenzyme A Acyl Carrier Protein, domain 2"/>
    <property type="match status" value="2"/>
</dbReference>
<dbReference type="Gene3D" id="3.10.129.110">
    <property type="entry name" value="Polyketide synthase dehydratase"/>
    <property type="match status" value="1"/>
</dbReference>
<dbReference type="InterPro" id="IPR001227">
    <property type="entry name" value="Ac_transferase_dom_sf"/>
</dbReference>
<dbReference type="InterPro" id="IPR036736">
    <property type="entry name" value="ACP-like_sf"/>
</dbReference>
<dbReference type="InterPro" id="IPR014043">
    <property type="entry name" value="Acyl_transferase_dom"/>
</dbReference>
<dbReference type="InterPro" id="IPR016035">
    <property type="entry name" value="Acyl_Trfase/lysoPLipase"/>
</dbReference>
<dbReference type="InterPro" id="IPR018201">
    <property type="entry name" value="Ketoacyl_synth_AS"/>
</dbReference>
<dbReference type="InterPro" id="IPR014031">
    <property type="entry name" value="Ketoacyl_synth_C"/>
</dbReference>
<dbReference type="InterPro" id="IPR014030">
    <property type="entry name" value="Ketoacyl_synth_N"/>
</dbReference>
<dbReference type="InterPro" id="IPR016036">
    <property type="entry name" value="Malonyl_transacylase_ACP-bd"/>
</dbReference>
<dbReference type="InterPro" id="IPR020841">
    <property type="entry name" value="PKS_Beta-ketoAc_synthase_dom"/>
</dbReference>
<dbReference type="InterPro" id="IPR042104">
    <property type="entry name" value="PKS_dehydratase_sf"/>
</dbReference>
<dbReference type="InterPro" id="IPR049900">
    <property type="entry name" value="PKS_mFAS_DH"/>
</dbReference>
<dbReference type="InterPro" id="IPR050091">
    <property type="entry name" value="PKS_NRPS_Biosynth_Enz"/>
</dbReference>
<dbReference type="InterPro" id="IPR020806">
    <property type="entry name" value="PKS_PP-bd"/>
</dbReference>
<dbReference type="InterPro" id="IPR009081">
    <property type="entry name" value="PP-bd_ACP"/>
</dbReference>
<dbReference type="InterPro" id="IPR030918">
    <property type="entry name" value="PT_fungal_PKS"/>
</dbReference>
<dbReference type="InterPro" id="IPR032088">
    <property type="entry name" value="SAT"/>
</dbReference>
<dbReference type="InterPro" id="IPR016039">
    <property type="entry name" value="Thiolase-like"/>
</dbReference>
<dbReference type="NCBIfam" id="TIGR04532">
    <property type="entry name" value="PT_fungal_PKS"/>
    <property type="match status" value="1"/>
</dbReference>
<dbReference type="PANTHER" id="PTHR43775">
    <property type="entry name" value="FATTY ACID SYNTHASE"/>
    <property type="match status" value="1"/>
</dbReference>
<dbReference type="PANTHER" id="PTHR43775:SF24">
    <property type="entry name" value="NON-REDUCING POLYKETIDE SYNTHASE APTA-RELATED"/>
    <property type="match status" value="1"/>
</dbReference>
<dbReference type="Pfam" id="PF00698">
    <property type="entry name" value="Acyl_transf_1"/>
    <property type="match status" value="1"/>
</dbReference>
<dbReference type="Pfam" id="PF22621">
    <property type="entry name" value="CurL-like_PKS_C"/>
    <property type="match status" value="1"/>
</dbReference>
<dbReference type="Pfam" id="PF00109">
    <property type="entry name" value="ketoacyl-synt"/>
    <property type="match status" value="1"/>
</dbReference>
<dbReference type="Pfam" id="PF02801">
    <property type="entry name" value="Ketoacyl-synt_C"/>
    <property type="match status" value="1"/>
</dbReference>
<dbReference type="Pfam" id="PF00550">
    <property type="entry name" value="PP-binding"/>
    <property type="match status" value="1"/>
</dbReference>
<dbReference type="Pfam" id="PF16073">
    <property type="entry name" value="SAT"/>
    <property type="match status" value="1"/>
</dbReference>
<dbReference type="SMART" id="SM00827">
    <property type="entry name" value="PKS_AT"/>
    <property type="match status" value="1"/>
</dbReference>
<dbReference type="SMART" id="SM00825">
    <property type="entry name" value="PKS_KS"/>
    <property type="match status" value="1"/>
</dbReference>
<dbReference type="SMART" id="SM00823">
    <property type="entry name" value="PKS_PP"/>
    <property type="match status" value="1"/>
</dbReference>
<dbReference type="SUPFAM" id="SSF47336">
    <property type="entry name" value="ACP-like"/>
    <property type="match status" value="1"/>
</dbReference>
<dbReference type="SUPFAM" id="SSF52151">
    <property type="entry name" value="FabD/lysophospholipase-like"/>
    <property type="match status" value="1"/>
</dbReference>
<dbReference type="SUPFAM" id="SSF55048">
    <property type="entry name" value="Probable ACP-binding domain of malonyl-CoA ACP transacylase"/>
    <property type="match status" value="1"/>
</dbReference>
<dbReference type="SUPFAM" id="SSF53901">
    <property type="entry name" value="Thiolase-like"/>
    <property type="match status" value="1"/>
</dbReference>
<dbReference type="PROSITE" id="PS50075">
    <property type="entry name" value="CARRIER"/>
    <property type="match status" value="1"/>
</dbReference>
<dbReference type="PROSITE" id="PS00606">
    <property type="entry name" value="KS3_1"/>
    <property type="match status" value="1"/>
</dbReference>
<dbReference type="PROSITE" id="PS52004">
    <property type="entry name" value="KS3_2"/>
    <property type="match status" value="1"/>
</dbReference>
<dbReference type="PROSITE" id="PS52019">
    <property type="entry name" value="PKS_MFAS_DH"/>
    <property type="match status" value="1"/>
</dbReference>
<accession>Q4WA61</accession>
<keyword id="KW-0012">Acyltransferase</keyword>
<keyword id="KW-0511">Multifunctional enzyme</keyword>
<keyword id="KW-0596">Phosphopantetheine</keyword>
<keyword id="KW-0597">Phosphoprotein</keyword>
<keyword id="KW-1185">Reference proteome</keyword>
<keyword id="KW-0808">Transferase</keyword>
<feature type="chain" id="PRO_0000437887" description="Non-reducing polyketide synthase nscA">
    <location>
        <begin position="1"/>
        <end position="1794"/>
    </location>
</feature>
<feature type="domain" description="Ketosynthase family 3 (KS3)" evidence="5">
    <location>
        <begin position="389"/>
        <end position="822"/>
    </location>
</feature>
<feature type="domain" description="PKS/mFAS DH" evidence="6">
    <location>
        <begin position="1318"/>
        <end position="1628"/>
    </location>
</feature>
<feature type="domain" description="Carrier" evidence="4">
    <location>
        <begin position="1717"/>
        <end position="1794"/>
    </location>
</feature>
<feature type="region of interest" description="N-terminal acylcarrier protein transacylase domain (SAT)" evidence="3">
    <location>
        <begin position="19"/>
        <end position="256"/>
    </location>
</feature>
<feature type="region of interest" description="Disordered" evidence="7">
    <location>
        <begin position="428"/>
        <end position="448"/>
    </location>
</feature>
<feature type="region of interest" description="Malonyl-CoA:ACP transacylase (MAT) domain" evidence="3">
    <location>
        <begin position="927"/>
        <end position="1230"/>
    </location>
</feature>
<feature type="region of interest" description="Product template (PT) domain" evidence="3">
    <location>
        <begin position="1314"/>
        <end position="1633"/>
    </location>
</feature>
<feature type="region of interest" description="N-terminal hotdog fold" evidence="6">
    <location>
        <begin position="1318"/>
        <end position="1454"/>
    </location>
</feature>
<feature type="region of interest" description="C-terminal hotdog fold" evidence="6">
    <location>
        <begin position="1482"/>
        <end position="1628"/>
    </location>
</feature>
<feature type="region of interest" description="Disordered" evidence="7">
    <location>
        <begin position="1637"/>
        <end position="1719"/>
    </location>
</feature>
<feature type="compositionally biased region" description="Basic and acidic residues" evidence="7">
    <location>
        <begin position="428"/>
        <end position="440"/>
    </location>
</feature>
<feature type="compositionally biased region" description="Polar residues" evidence="7">
    <location>
        <begin position="1644"/>
        <end position="1655"/>
    </location>
</feature>
<feature type="active site" description="For beta-ketoacyl synthase activity" evidence="5">
    <location>
        <position position="562"/>
    </location>
</feature>
<feature type="active site" description="For beta-ketoacyl synthase activity" evidence="5">
    <location>
        <position position="697"/>
    </location>
</feature>
<feature type="active site" description="For beta-ketoacyl synthase activity" evidence="5">
    <location>
        <position position="740"/>
    </location>
</feature>
<feature type="active site" description="Proton acceptor; for dehydratase activity" evidence="6">
    <location>
        <position position="1350"/>
    </location>
</feature>
<feature type="active site" description="Proton donor; for dehydratase activity" evidence="6">
    <location>
        <position position="1539"/>
    </location>
</feature>
<feature type="modified residue" description="O-(pantetheine 4'-phosphoryl)serine" evidence="4">
    <location>
        <position position="1754"/>
    </location>
</feature>
<gene>
    <name evidence="8" type="primary">nscA</name>
    <name type="ORF">AFUA_7G00160</name>
</gene>
<reference key="1">
    <citation type="journal article" date="2005" name="Nature">
        <title>Genomic sequence of the pathogenic and allergenic filamentous fungus Aspergillus fumigatus.</title>
        <authorList>
            <person name="Nierman W.C."/>
            <person name="Pain A."/>
            <person name="Anderson M.J."/>
            <person name="Wortman J.R."/>
            <person name="Kim H.S."/>
            <person name="Arroyo J."/>
            <person name="Berriman M."/>
            <person name="Abe K."/>
            <person name="Archer D.B."/>
            <person name="Bermejo C."/>
            <person name="Bennett J.W."/>
            <person name="Bowyer P."/>
            <person name="Chen D."/>
            <person name="Collins M."/>
            <person name="Coulsen R."/>
            <person name="Davies R."/>
            <person name="Dyer P.S."/>
            <person name="Farman M.L."/>
            <person name="Fedorova N."/>
            <person name="Fedorova N.D."/>
            <person name="Feldblyum T.V."/>
            <person name="Fischer R."/>
            <person name="Fosker N."/>
            <person name="Fraser A."/>
            <person name="Garcia J.L."/>
            <person name="Garcia M.J."/>
            <person name="Goble A."/>
            <person name="Goldman G.H."/>
            <person name="Gomi K."/>
            <person name="Griffith-Jones S."/>
            <person name="Gwilliam R."/>
            <person name="Haas B.J."/>
            <person name="Haas H."/>
            <person name="Harris D.E."/>
            <person name="Horiuchi H."/>
            <person name="Huang J."/>
            <person name="Humphray S."/>
            <person name="Jimenez J."/>
            <person name="Keller N."/>
            <person name="Khouri H."/>
            <person name="Kitamoto K."/>
            <person name="Kobayashi T."/>
            <person name="Konzack S."/>
            <person name="Kulkarni R."/>
            <person name="Kumagai T."/>
            <person name="Lafton A."/>
            <person name="Latge J.-P."/>
            <person name="Li W."/>
            <person name="Lord A."/>
            <person name="Lu C."/>
            <person name="Majoros W.H."/>
            <person name="May G.S."/>
            <person name="Miller B.L."/>
            <person name="Mohamoud Y."/>
            <person name="Molina M."/>
            <person name="Monod M."/>
            <person name="Mouyna I."/>
            <person name="Mulligan S."/>
            <person name="Murphy L.D."/>
            <person name="O'Neil S."/>
            <person name="Paulsen I."/>
            <person name="Penalva M.A."/>
            <person name="Pertea M."/>
            <person name="Price C."/>
            <person name="Pritchard B.L."/>
            <person name="Quail M.A."/>
            <person name="Rabbinowitsch E."/>
            <person name="Rawlins N."/>
            <person name="Rajandream M.A."/>
            <person name="Reichard U."/>
            <person name="Renauld H."/>
            <person name="Robson G.D."/>
            <person name="Rodriguez de Cordoba S."/>
            <person name="Rodriguez-Pena J.M."/>
            <person name="Ronning C.M."/>
            <person name="Rutter S."/>
            <person name="Salzberg S.L."/>
            <person name="Sanchez M."/>
            <person name="Sanchez-Ferrero J.C."/>
            <person name="Saunders D."/>
            <person name="Seeger K."/>
            <person name="Squares R."/>
            <person name="Squares S."/>
            <person name="Takeuchi M."/>
            <person name="Tekaia F."/>
            <person name="Turner G."/>
            <person name="Vazquez de Aldana C.R."/>
            <person name="Weidman J."/>
            <person name="White O."/>
            <person name="Woodward J.R."/>
            <person name="Yu J.-H."/>
            <person name="Fraser C.M."/>
            <person name="Galagan J.E."/>
            <person name="Asai K."/>
            <person name="Machida M."/>
            <person name="Hall N."/>
            <person name="Barrell B.G."/>
            <person name="Denning D.W."/>
        </authorList>
    </citation>
    <scope>NUCLEOTIDE SEQUENCE [LARGE SCALE GENOMIC DNA]</scope>
    <source>
        <strain>ATCC MYA-4609 / CBS 101355 / FGSC A1100 / Af293</strain>
    </source>
</reference>
<reference key="2">
    <citation type="journal article" date="2013" name="ACS Synth. Biol.">
        <title>Discovery of cryptic polyketide metabolites from dermatophytes using heterologous expression in Aspergillus nidulans.</title>
        <authorList>
            <person name="Yin W.B."/>
            <person name="Chooi Y.H."/>
            <person name="Smith A.R."/>
            <person name="Cacho R.A."/>
            <person name="Hu Y."/>
            <person name="White T.C."/>
            <person name="Tang Y."/>
        </authorList>
    </citation>
    <scope>FUNCTION</scope>
</reference>
<reference key="3">
    <citation type="journal article" date="2013" name="Org. Lett.">
        <title>Genome mining of a prenylated and immunosuppressive polyketide from pathogenic fungi.</title>
        <authorList>
            <person name="Chooi Y.H."/>
            <person name="Fang J."/>
            <person name="Liu H."/>
            <person name="Filler S.G."/>
            <person name="Wang P."/>
            <person name="Tang Y."/>
        </authorList>
    </citation>
    <scope>FUNCTION</scope>
</reference>
<protein>
    <recommendedName>
        <fullName evidence="8">Non-reducing polyketide synthase nscA</fullName>
        <ecNumber evidence="9">2.3.1.-</ecNumber>
    </recommendedName>
    <alternativeName>
        <fullName evidence="8">Conidial yellow pigment biosynthesis polyketide synthase nscA</fullName>
    </alternativeName>
    <alternativeName>
        <fullName evidence="8">Neosartoricin biosynthesis protein A</fullName>
    </alternativeName>
</protein>
<name>NSCA_ASPFU</name>
<sequence length="1794" mass="195538">MATPRGQTVWFGNEFPNDDLKDLFRRLHQHSKDRRFRLLSVFLEESTAILKEEVANLPQQLQELVPHFDTACTLPEVDFRQGPLGAAMESALLTILELGMLIGHYEAEDIEWDLDPSRTILAGLSIGILAGAAVALSSSLADVAKVGAESVRVSFRLGVYVADISTKLEAPQSDGTLQSWAHVVTGMSHEAVQEELSQYNAVTQNPEITKVFVSAADKTSVSVTGPPSRIKAAFQHSPSLRYSKSLPLPVYDGLCHAAHLYSQDDIEIVINSAKSVIPTSRPVRLPLISSQTGKPFAAKTAGELFLEIGTELLTGTIFLDTVTAGILEHVKLQEPTGNYEIVSFRMSQVLNGILTAIETDFPELGRARRDMVSWVHGDYGARRPSSYAASKLAIVGMACRLPGGANDPELFWELLEQGRDTLTTVPPDRFDLNTHYDPTGKTENATQTPFGNFIDRPGYFDAGFFNMSPREAEQTDPMHRLALVTAYEAMEMAGMVPGRTPSTRPNRIGTFYGQASDDWRELNASQNISTYAVPGGERAFANGRINYFFKFSGPSYNIDTACSSGLAAVQAACSALWAGEADTVIAGGLNVITDPDNYAGLGNGHFLSKTGQCKVWDKDADGYCRADGIGSVVIKRLEDAEADNDNILAVILGARTNHSAEAVSITHPHAGAQKANYRQVLHQAGVNPLDVSYVELHGTGTQAGDAVESESVSDVFAPSTPRRRPDQRLYLGAVKSNIGHGEAAAGITSLLKALLVFQKNMIPKHIGIKTEINPIIPKDLERRHVGLAMENTPWPRPAGKKRLAVVNSFGAHGGNTTVLLEDAPERVKVSTQDDRTTHPVVISAKSKKSLQANIEKLLSWLDQNPDANLGDLSYTLCARRMHHSMRFGAAASGIAALQKTLRSWLDNPKASAELRAIPNDTPSVVLTFTGQGAYYSGMGRELLAEFSYFRTEVFQLDQIAQRLGFPSVVPVIDGSIDDGPASPVLTQLSVTVLEIALARFWSHLGIRISAVIGHSLGEYAAFAVAGVISATEALYLVGRRAQLTEERCTQGSHSMLSVRASEDDIEELIAGSPDTAELAYEVCCRNTPQDTVIGGTQESIDSIRQALEKNTIKCTQLDVPFAFHTAQMDPILDSLETLATPITFKAPSIPVLSPLLGSVVFDRKSIHAQYLRRATRETVDFVAAIEAAQDFGLVDAKTIWIDVGPHPICASLVRGIDSSASVISSCRRNEDNLATMSKSLVTLHLAGLTPCWAEYFRPREQEYSLLKLPTYSWNETDYWIPYIGTWTLDKALLKYGEKKAPLSLSMSRPSALRTSLVHQITTETVEATTATLHVLSDMQHPDFLEALHGHRMNNCGVATSSIWSDMAFTVGEYLYRRLVPQAKDVHMNLSDLEVLHAQVALEKKGSVQPLVLKAHLNLSTSSMSLAWFNASAETGECAAESFATCVVRFEDPAAWTREWDRLSHLVLGRIEALEQRAVEGKASKLSKPLAYTLFKNVVDYADRYRGMDQVVLYEHEAVAEVTLVAERHGTWHTPPHWIDSVSHLAGLVMNGSNASNTRDYFYVTPGCSSFRLLNPLKAGGKYRSYVRMFPLPEEANMYAGDVYILEGEQIVGMVGHIRFRRVPRLLMDRFFSPAAASHTEKQLQETAPSATNVKKSTPPPAEAPISVPVAPGNPVAIPLPTASKSQVATPPLTPPSQEDSPGESAVITPATSDRGDSTDAGVVGQCLKVMARETGLEVDALTPDASFVQLGIDSLMSLVLSEKFRAELGIEIKSSLFLECPTIGEMTAWLEEYC</sequence>
<evidence type="ECO:0000250" key="1">
    <source>
        <dbReference type="UniProtKB" id="A0A0K0MCJ4"/>
    </source>
</evidence>
<evidence type="ECO:0000250" key="2">
    <source>
        <dbReference type="UniProtKB" id="Q5B0D0"/>
    </source>
</evidence>
<evidence type="ECO:0000255" key="3"/>
<evidence type="ECO:0000255" key="4">
    <source>
        <dbReference type="PROSITE-ProRule" id="PRU00258"/>
    </source>
</evidence>
<evidence type="ECO:0000255" key="5">
    <source>
        <dbReference type="PROSITE-ProRule" id="PRU01348"/>
    </source>
</evidence>
<evidence type="ECO:0000255" key="6">
    <source>
        <dbReference type="PROSITE-ProRule" id="PRU01363"/>
    </source>
</evidence>
<evidence type="ECO:0000256" key="7">
    <source>
        <dbReference type="SAM" id="MobiDB-lite"/>
    </source>
</evidence>
<evidence type="ECO:0000303" key="8">
    <source>
    </source>
</evidence>
<evidence type="ECO:0000305" key="9">
    <source>
    </source>
</evidence>
<evidence type="ECO:0000305" key="10">
    <source>
    </source>
</evidence>
<organism>
    <name type="scientific">Aspergillus fumigatus (strain ATCC MYA-4609 / CBS 101355 / FGSC A1100 / Af293)</name>
    <name type="common">Neosartorya fumigata</name>
    <dbReference type="NCBI Taxonomy" id="330879"/>
    <lineage>
        <taxon>Eukaryota</taxon>
        <taxon>Fungi</taxon>
        <taxon>Dikarya</taxon>
        <taxon>Ascomycota</taxon>
        <taxon>Pezizomycotina</taxon>
        <taxon>Eurotiomycetes</taxon>
        <taxon>Eurotiomycetidae</taxon>
        <taxon>Eurotiales</taxon>
        <taxon>Aspergillaceae</taxon>
        <taxon>Aspergillus</taxon>
        <taxon>Aspergillus subgen. Fumigati</taxon>
    </lineage>
</organism>
<comment type="function">
    <text evidence="9 10">Non-reducing polyketide synthase; part of the gene cluster that mediates the biosynthesis of neosartoricin, a prenylated anthracenone that exhibits T-cell antiproliferative activity, suggestive of a physiological role as an immunosuppressive agent (PubMed:23368997, PubMed:23758576). The non-reducing polyketide synthase nscA probably synthesizes and cyclizes the decaketide backbone (PubMed:23368997). The hydrolase nscB then mediates the product release through hydrolysis followed by spontaneous decarboxylation (PubMed:23368997). The prenyltransferase nscD catalyzes the addition of the dimethylallyl group to the aromatic C5 (PubMed:23368997). The FAD-dependent monooxygenase nscC is then responsible for the stereospecific hydroxylation at C2 (PubMed:23368997). There is no gene encoding O-acetyltransferase in the nsc gene cluster; thus, the last step of 2-O-acetylation leading to neosartoricin may be catalyzed by an unidentified O-acetyltransferase (PubMed:23368997).</text>
</comment>
<comment type="cofactor">
    <cofactor evidence="1">
        <name>pantetheine 4'-phosphate</name>
        <dbReference type="ChEBI" id="CHEBI:47942"/>
    </cofactor>
    <text evidence="3">Binds 1 phosphopantetheine covalently.</text>
</comment>
<comment type="pathway">
    <text evidence="9">Secondary metabolite biosynthesis.</text>
</comment>
<comment type="domain">
    <text evidence="2">Multidomain protein; including a starter unit:ACP transacylase (SAT) that selects the starter unit; a ketosynthase (KS) that catalyzes repeated decarboxylative condensation to elongate the polyketide backbone; a malonyl-CoA:ACP transacylase (MAT) that selects and transfers the extender unit malonyl-CoA; a product template (PT) domain that controls the immediate cyclization regioselectivity of the reactive polyketide backbone; and an acyl-carrier protein (ACP) that serves as the tether of the growing and completed polyketide via its phosphopantetheinyl arm (By similarity).</text>
</comment>
<proteinExistence type="inferred from homology"/>